<comment type="function">
    <text evidence="1">Catalyzes the phosphorylation of D-fructose 6-phosphate to fructose 1,6-bisphosphate by ATP, the first committing step of glycolysis.</text>
</comment>
<comment type="catalytic activity">
    <reaction evidence="1">
        <text>beta-D-fructose 6-phosphate + ATP = beta-D-fructose 1,6-bisphosphate + ADP + H(+)</text>
        <dbReference type="Rhea" id="RHEA:16109"/>
        <dbReference type="ChEBI" id="CHEBI:15378"/>
        <dbReference type="ChEBI" id="CHEBI:30616"/>
        <dbReference type="ChEBI" id="CHEBI:32966"/>
        <dbReference type="ChEBI" id="CHEBI:57634"/>
        <dbReference type="ChEBI" id="CHEBI:456216"/>
        <dbReference type="EC" id="2.7.1.11"/>
    </reaction>
</comment>
<comment type="cofactor">
    <cofactor evidence="1">
        <name>Mg(2+)</name>
        <dbReference type="ChEBI" id="CHEBI:18420"/>
    </cofactor>
</comment>
<comment type="activity regulation">
    <text evidence="1">Allosterically activated by ADP and other diphosphonucleosides, and allosterically inhibited by phosphoenolpyruvate.</text>
</comment>
<comment type="pathway">
    <text evidence="1">Carbohydrate degradation; glycolysis; D-glyceraldehyde 3-phosphate and glycerone phosphate from D-glucose: step 3/4.</text>
</comment>
<comment type="subunit">
    <text evidence="1">Homotetramer.</text>
</comment>
<comment type="subcellular location">
    <subcellularLocation>
        <location evidence="1">Cytoplasm</location>
    </subcellularLocation>
</comment>
<comment type="similarity">
    <text evidence="1">Belongs to the phosphofructokinase type A (PFKA) family. ATP-dependent PFK group I subfamily. Prokaryotic clade 'B1' sub-subfamily.</text>
</comment>
<reference key="1">
    <citation type="submission" date="2007-11" db="EMBL/GenBank/DDBJ databases">
        <title>The genome sequence of the hyperthermophilic bacterium Thermotoga neapolitana.</title>
        <authorList>
            <person name="Lim S.K."/>
            <person name="Kim J.S."/>
            <person name="Cha S.H."/>
            <person name="Park B.C."/>
            <person name="Lee D.S."/>
            <person name="Tae H.S."/>
            <person name="Kim S.-J."/>
            <person name="Kim J.J."/>
            <person name="Park K.J."/>
            <person name="Lee S.Y."/>
        </authorList>
    </citation>
    <scope>NUCLEOTIDE SEQUENCE [LARGE SCALE GENOMIC DNA]</scope>
    <source>
        <strain>ATCC 49049 / DSM 4359 / NBRC 107923 / NS-E</strain>
    </source>
</reference>
<name>PFKA_THENN</name>
<gene>
    <name evidence="1" type="primary">pfkA</name>
    <name type="ordered locus">CTN_0476</name>
</gene>
<dbReference type="EC" id="2.7.1.11" evidence="1"/>
<dbReference type="EMBL" id="CP000916">
    <property type="protein sequence ID" value="ACM22652.1"/>
    <property type="molecule type" value="Genomic_DNA"/>
</dbReference>
<dbReference type="RefSeq" id="WP_015918971.1">
    <property type="nucleotide sequence ID" value="NC_011978.1"/>
</dbReference>
<dbReference type="SMR" id="B9K6R9"/>
<dbReference type="STRING" id="309803.CTN_0476"/>
<dbReference type="KEGG" id="tna:CTN_0476"/>
<dbReference type="eggNOG" id="COG0205">
    <property type="taxonomic scope" value="Bacteria"/>
</dbReference>
<dbReference type="HOGENOM" id="CLU_020655_0_1_0"/>
<dbReference type="UniPathway" id="UPA00109">
    <property type="reaction ID" value="UER00182"/>
</dbReference>
<dbReference type="Proteomes" id="UP000000445">
    <property type="component" value="Chromosome"/>
</dbReference>
<dbReference type="GO" id="GO:0005945">
    <property type="term" value="C:6-phosphofructokinase complex"/>
    <property type="evidence" value="ECO:0007669"/>
    <property type="project" value="TreeGrafter"/>
</dbReference>
<dbReference type="GO" id="GO:0003872">
    <property type="term" value="F:6-phosphofructokinase activity"/>
    <property type="evidence" value="ECO:0007669"/>
    <property type="project" value="UniProtKB-UniRule"/>
</dbReference>
<dbReference type="GO" id="GO:0016208">
    <property type="term" value="F:AMP binding"/>
    <property type="evidence" value="ECO:0007669"/>
    <property type="project" value="TreeGrafter"/>
</dbReference>
<dbReference type="GO" id="GO:0005524">
    <property type="term" value="F:ATP binding"/>
    <property type="evidence" value="ECO:0007669"/>
    <property type="project" value="UniProtKB-KW"/>
</dbReference>
<dbReference type="GO" id="GO:0070095">
    <property type="term" value="F:fructose-6-phosphate binding"/>
    <property type="evidence" value="ECO:0007669"/>
    <property type="project" value="TreeGrafter"/>
</dbReference>
<dbReference type="GO" id="GO:0042802">
    <property type="term" value="F:identical protein binding"/>
    <property type="evidence" value="ECO:0007669"/>
    <property type="project" value="TreeGrafter"/>
</dbReference>
<dbReference type="GO" id="GO:0046872">
    <property type="term" value="F:metal ion binding"/>
    <property type="evidence" value="ECO:0007669"/>
    <property type="project" value="UniProtKB-KW"/>
</dbReference>
<dbReference type="GO" id="GO:0048029">
    <property type="term" value="F:monosaccharide binding"/>
    <property type="evidence" value="ECO:0007669"/>
    <property type="project" value="TreeGrafter"/>
</dbReference>
<dbReference type="GO" id="GO:0061621">
    <property type="term" value="P:canonical glycolysis"/>
    <property type="evidence" value="ECO:0007669"/>
    <property type="project" value="TreeGrafter"/>
</dbReference>
<dbReference type="GO" id="GO:0030388">
    <property type="term" value="P:fructose 1,6-bisphosphate metabolic process"/>
    <property type="evidence" value="ECO:0007669"/>
    <property type="project" value="TreeGrafter"/>
</dbReference>
<dbReference type="GO" id="GO:0006002">
    <property type="term" value="P:fructose 6-phosphate metabolic process"/>
    <property type="evidence" value="ECO:0007669"/>
    <property type="project" value="InterPro"/>
</dbReference>
<dbReference type="FunFam" id="3.40.50.450:FF:000001">
    <property type="entry name" value="ATP-dependent 6-phosphofructokinase"/>
    <property type="match status" value="1"/>
</dbReference>
<dbReference type="FunFam" id="3.40.50.460:FF:000002">
    <property type="entry name" value="ATP-dependent 6-phosphofructokinase"/>
    <property type="match status" value="1"/>
</dbReference>
<dbReference type="Gene3D" id="3.40.50.450">
    <property type="match status" value="1"/>
</dbReference>
<dbReference type="Gene3D" id="3.40.50.460">
    <property type="entry name" value="Phosphofructokinase domain"/>
    <property type="match status" value="1"/>
</dbReference>
<dbReference type="HAMAP" id="MF_00339">
    <property type="entry name" value="Phosphofructokinase_I_B1"/>
    <property type="match status" value="1"/>
</dbReference>
<dbReference type="InterPro" id="IPR022953">
    <property type="entry name" value="ATP_PFK"/>
</dbReference>
<dbReference type="InterPro" id="IPR012003">
    <property type="entry name" value="ATP_PFK_prok-type"/>
</dbReference>
<dbReference type="InterPro" id="IPR012828">
    <property type="entry name" value="PFKA_ATP_prok"/>
</dbReference>
<dbReference type="InterPro" id="IPR015912">
    <property type="entry name" value="Phosphofructokinase_CS"/>
</dbReference>
<dbReference type="InterPro" id="IPR000023">
    <property type="entry name" value="Phosphofructokinase_dom"/>
</dbReference>
<dbReference type="InterPro" id="IPR035966">
    <property type="entry name" value="PKF_sf"/>
</dbReference>
<dbReference type="NCBIfam" id="TIGR02482">
    <property type="entry name" value="PFKA_ATP"/>
    <property type="match status" value="1"/>
</dbReference>
<dbReference type="NCBIfam" id="NF002872">
    <property type="entry name" value="PRK03202.1"/>
    <property type="match status" value="1"/>
</dbReference>
<dbReference type="PANTHER" id="PTHR13697:SF4">
    <property type="entry name" value="ATP-DEPENDENT 6-PHOSPHOFRUCTOKINASE"/>
    <property type="match status" value="1"/>
</dbReference>
<dbReference type="PANTHER" id="PTHR13697">
    <property type="entry name" value="PHOSPHOFRUCTOKINASE"/>
    <property type="match status" value="1"/>
</dbReference>
<dbReference type="Pfam" id="PF00365">
    <property type="entry name" value="PFK"/>
    <property type="match status" value="1"/>
</dbReference>
<dbReference type="PIRSF" id="PIRSF000532">
    <property type="entry name" value="ATP_PFK_prok"/>
    <property type="match status" value="1"/>
</dbReference>
<dbReference type="PRINTS" id="PR00476">
    <property type="entry name" value="PHFRCTKINASE"/>
</dbReference>
<dbReference type="SUPFAM" id="SSF53784">
    <property type="entry name" value="Phosphofructokinase"/>
    <property type="match status" value="1"/>
</dbReference>
<dbReference type="PROSITE" id="PS00433">
    <property type="entry name" value="PHOSPHOFRUCTOKINASE"/>
    <property type="match status" value="1"/>
</dbReference>
<feature type="chain" id="PRO_1000133290" description="ATP-dependent 6-phosphofructokinase">
    <location>
        <begin position="1"/>
        <end position="319"/>
    </location>
</feature>
<feature type="active site" description="Proton acceptor" evidence="1">
    <location>
        <position position="128"/>
    </location>
</feature>
<feature type="binding site" evidence="1">
    <location>
        <position position="11"/>
    </location>
    <ligand>
        <name>ATP</name>
        <dbReference type="ChEBI" id="CHEBI:30616"/>
    </ligand>
</feature>
<feature type="binding site" evidence="1">
    <location>
        <begin position="21"/>
        <end position="25"/>
    </location>
    <ligand>
        <name>ADP</name>
        <dbReference type="ChEBI" id="CHEBI:456216"/>
        <note>allosteric activator; ligand shared between dimeric partners</note>
    </ligand>
</feature>
<feature type="binding site" evidence="1">
    <location>
        <begin position="72"/>
        <end position="73"/>
    </location>
    <ligand>
        <name>ATP</name>
        <dbReference type="ChEBI" id="CHEBI:30616"/>
    </ligand>
</feature>
<feature type="binding site" evidence="1">
    <location>
        <begin position="102"/>
        <end position="105"/>
    </location>
    <ligand>
        <name>ATP</name>
        <dbReference type="ChEBI" id="CHEBI:30616"/>
    </ligand>
</feature>
<feature type="binding site" evidence="1">
    <location>
        <position position="103"/>
    </location>
    <ligand>
        <name>Mg(2+)</name>
        <dbReference type="ChEBI" id="CHEBI:18420"/>
        <note>catalytic</note>
    </ligand>
</feature>
<feature type="binding site" description="in other chain" evidence="1">
    <location>
        <begin position="126"/>
        <end position="128"/>
    </location>
    <ligand>
        <name>substrate</name>
        <note>ligand shared between dimeric partners</note>
    </ligand>
</feature>
<feature type="binding site" description="in other chain" evidence="1">
    <location>
        <position position="155"/>
    </location>
    <ligand>
        <name>ADP</name>
        <dbReference type="ChEBI" id="CHEBI:456216"/>
        <note>allosteric activator; ligand shared between dimeric partners</note>
    </ligand>
</feature>
<feature type="binding site" evidence="1">
    <location>
        <position position="163"/>
    </location>
    <ligand>
        <name>substrate</name>
        <note>ligand shared between dimeric partners</note>
    </ligand>
</feature>
<feature type="binding site" description="in other chain" evidence="1">
    <location>
        <begin position="170"/>
        <end position="172"/>
    </location>
    <ligand>
        <name>substrate</name>
        <note>ligand shared between dimeric partners</note>
    </ligand>
</feature>
<feature type="binding site" description="in other chain" evidence="1">
    <location>
        <begin position="186"/>
        <end position="188"/>
    </location>
    <ligand>
        <name>ADP</name>
        <dbReference type="ChEBI" id="CHEBI:456216"/>
        <note>allosteric activator; ligand shared between dimeric partners</note>
    </ligand>
</feature>
<feature type="binding site" description="in other chain" evidence="1">
    <location>
        <position position="212"/>
    </location>
    <ligand>
        <name>ADP</name>
        <dbReference type="ChEBI" id="CHEBI:456216"/>
        <note>allosteric activator; ligand shared between dimeric partners</note>
    </ligand>
</feature>
<feature type="binding site" description="in other chain" evidence="1">
    <location>
        <begin position="214"/>
        <end position="216"/>
    </location>
    <ligand>
        <name>ADP</name>
        <dbReference type="ChEBI" id="CHEBI:456216"/>
        <note>allosteric activator; ligand shared between dimeric partners</note>
    </ligand>
</feature>
<feature type="binding site" description="in other chain" evidence="1">
    <location>
        <position position="223"/>
    </location>
    <ligand>
        <name>substrate</name>
        <note>ligand shared between dimeric partners</note>
    </ligand>
</feature>
<feature type="binding site" evidence="1">
    <location>
        <position position="244"/>
    </location>
    <ligand>
        <name>substrate</name>
        <note>ligand shared between dimeric partners</note>
    </ligand>
</feature>
<feature type="binding site" description="in other chain" evidence="1">
    <location>
        <begin position="250"/>
        <end position="253"/>
    </location>
    <ligand>
        <name>substrate</name>
        <note>ligand shared between dimeric partners</note>
    </ligand>
</feature>
<sequence length="319" mass="34358">MKKIAVLTSGGDAPGMNAAVRAVVRYGIKNGLEVIGVRRGYSGLIDGDFVKLEYKDVAGITEKGGTILRTSRCEEFKTEEGREAAAKQLKKHGIEGLVVIGGEGSLTGAHLLHEEHNIPVVGIPATIDNDIGLTDMCIGVDTCLNTVMDAIQKLKDTASSHERAFIVEVMGRHSGYIALMAGLVTGAEAIIIPEIPVDYSQLADRILQERRRGKINSIIVVAEGAASAYTVARHLEYRIGYETRITILGHVQRGGSPTAFDRRLALSMGVEAVEALLDGEADVMIALQGNKFVRVPIMEALSTKKTIDKKLYEIAHLLS</sequence>
<keyword id="KW-0021">Allosteric enzyme</keyword>
<keyword id="KW-0067">ATP-binding</keyword>
<keyword id="KW-0963">Cytoplasm</keyword>
<keyword id="KW-0324">Glycolysis</keyword>
<keyword id="KW-0418">Kinase</keyword>
<keyword id="KW-0460">Magnesium</keyword>
<keyword id="KW-0479">Metal-binding</keyword>
<keyword id="KW-0547">Nucleotide-binding</keyword>
<keyword id="KW-0808">Transferase</keyword>
<organism>
    <name type="scientific">Thermotoga neapolitana (strain ATCC 49049 / DSM 4359 / NBRC 107923 / NS-E)</name>
    <dbReference type="NCBI Taxonomy" id="309803"/>
    <lineage>
        <taxon>Bacteria</taxon>
        <taxon>Thermotogati</taxon>
        <taxon>Thermotogota</taxon>
        <taxon>Thermotogae</taxon>
        <taxon>Thermotogales</taxon>
        <taxon>Thermotogaceae</taxon>
        <taxon>Thermotoga</taxon>
    </lineage>
</organism>
<proteinExistence type="inferred from homology"/>
<evidence type="ECO:0000255" key="1">
    <source>
        <dbReference type="HAMAP-Rule" id="MF_00339"/>
    </source>
</evidence>
<protein>
    <recommendedName>
        <fullName evidence="1">ATP-dependent 6-phosphofructokinase</fullName>
        <shortName evidence="1">ATP-PFK</shortName>
        <shortName evidence="1">Phosphofructokinase</shortName>
        <ecNumber evidence="1">2.7.1.11</ecNumber>
    </recommendedName>
    <alternativeName>
        <fullName evidence="1">Phosphohexokinase</fullName>
    </alternativeName>
</protein>
<accession>B9K6R9</accession>